<comment type="function">
    <text evidence="1">Binds specifically to cytosolic chaperonin (c-CPN) and transfers target proteins to it. Binds to nascent polypeptide chain and promotes folding in an environment in which there are many competing pathways for nonnative proteins. Represses the transcriptional activity of MYC.</text>
</comment>
<comment type="subunit">
    <text>Heterohexamer of two PFD-alpha type and four PFD-beta type subunits. Binds to MYC; interacts with its N-terminal domain.</text>
</comment>
<comment type="interaction">
    <interactant intactId="EBI-357275">
        <id>Q99471</id>
    </interactant>
    <interactant intactId="EBI-11096309">
        <id>Q9NYB9-2</id>
        <label>ABI2</label>
    </interactant>
    <organismsDiffer>false</organismsDiffer>
    <experiments>3</experiments>
</comment>
<comment type="interaction">
    <interactant intactId="EBI-357275">
        <id>Q99471</id>
    </interactant>
    <interactant intactId="EBI-14493093">
        <id>Q3KP44</id>
        <label>ANKRD55</label>
    </interactant>
    <organismsDiffer>false</organismsDiffer>
    <experiments>3</experiments>
</comment>
<comment type="interaction">
    <interactant intactId="EBI-357275">
        <id>Q99471</id>
    </interactant>
    <interactant intactId="EBI-745689">
        <id>Q7L5A3</id>
        <label>ATOSB</label>
    </interactant>
    <organismsDiffer>false</organismsDiffer>
    <experiments>3</experiments>
</comment>
<comment type="interaction">
    <interactant intactId="EBI-357275">
        <id>Q99471</id>
    </interactant>
    <interactant intactId="EBI-1050106">
        <id>O75934</id>
        <label>BCAS2</label>
    </interactant>
    <organismsDiffer>false</organismsDiffer>
    <experiments>3</experiments>
</comment>
<comment type="interaction">
    <interactant intactId="EBI-357275">
        <id>Q99471</id>
    </interactant>
    <interactant intactId="EBI-765407">
        <id>P41182</id>
        <label>BCL6</label>
    </interactant>
    <organismsDiffer>false</organismsDiffer>
    <experiments>3</experiments>
</comment>
<comment type="interaction">
    <interactant intactId="EBI-357275">
        <id>Q99471</id>
    </interactant>
    <interactant intactId="EBI-711810">
        <id>O14503</id>
        <label>BHLHE40</label>
    </interactant>
    <organismsDiffer>false</organismsDiffer>
    <experiments>3</experiments>
</comment>
<comment type="interaction">
    <interactant intactId="EBI-357275">
        <id>Q99471</id>
    </interactant>
    <interactant intactId="EBI-12809220">
        <id>Q5SWW7</id>
        <label>C10orf55</label>
    </interactant>
    <organismsDiffer>false</organismsDiffer>
    <experiments>3</experiments>
</comment>
<comment type="interaction">
    <interactant intactId="EBI-357275">
        <id>Q99471</id>
    </interactant>
    <interactant intactId="EBI-744052">
        <id>Q5T681</id>
        <label>C10orf62</label>
    </interactant>
    <organismsDiffer>false</organismsDiffer>
    <experiments>3</experiments>
</comment>
<comment type="interaction">
    <interactant intactId="EBI-357275">
        <id>Q99471</id>
    </interactant>
    <interactant intactId="EBI-7317823">
        <id>Q6P5X5</id>
        <label>C22orf39</label>
    </interactant>
    <organismsDiffer>false</organismsDiffer>
    <experiments>3</experiments>
</comment>
<comment type="interaction">
    <interactant intactId="EBI-357275">
        <id>Q99471</id>
    </interactant>
    <interactant intactId="EBI-739580">
        <id>Q13137</id>
        <label>CALCOCO2</label>
    </interactant>
    <organismsDiffer>false</organismsDiffer>
    <experiments>4</experiments>
</comment>
<comment type="interaction">
    <interactant intactId="EBI-357275">
        <id>Q99471</id>
    </interactant>
    <interactant intactId="EBI-11748295">
        <id>E9PSE9</id>
        <label>CCDC198</label>
    </interactant>
    <organismsDiffer>false</organismsDiffer>
    <experiments>3</experiments>
</comment>
<comment type="interaction">
    <interactant intactId="EBI-357275">
        <id>Q99471</id>
    </interactant>
    <interactant intactId="EBI-12155483">
        <id>Q9H1P6</id>
        <label>CIMIP1</label>
    </interactant>
    <organismsDiffer>false</organismsDiffer>
    <experiments>3</experiments>
</comment>
<comment type="interaction">
    <interactant intactId="EBI-357275">
        <id>Q99471</id>
    </interactant>
    <interactant intactId="EBI-10239122">
        <id>Q1MSJ5-1</id>
        <label>CSPP1</label>
    </interactant>
    <organismsDiffer>false</organismsDiffer>
    <experiments>3</experiments>
</comment>
<comment type="interaction">
    <interactant intactId="EBI-357275">
        <id>Q99471</id>
    </interactant>
    <interactant intactId="EBI-9679045">
        <id>Q9NQL9</id>
        <label>DMRT3</label>
    </interactant>
    <organismsDiffer>false</organismsDiffer>
    <experiments>3</experiments>
</comment>
<comment type="interaction">
    <interactant intactId="EBI-357275">
        <id>Q99471</id>
    </interactant>
    <interactant intactId="EBI-6918542">
        <id>Q8TEW6</id>
        <label>DOK4</label>
    </interactant>
    <organismsDiffer>false</organismsDiffer>
    <experiments>3</experiments>
</comment>
<comment type="interaction">
    <interactant intactId="EBI-357275">
        <id>Q99471</id>
    </interactant>
    <interactant intactId="EBI-10692909">
        <id>Q9P104-2</id>
        <label>DOK5</label>
    </interactant>
    <organismsDiffer>false</organismsDiffer>
    <experiments>3</experiments>
</comment>
<comment type="interaction">
    <interactant intactId="EBI-357275">
        <id>Q99471</id>
    </interactant>
    <interactant intactId="EBI-11980989">
        <id>Q5T9C2-3</id>
        <label>EEIG1</label>
    </interactant>
    <organismsDiffer>false</organismsDiffer>
    <experiments>3</experiments>
</comment>
<comment type="interaction">
    <interactant intactId="EBI-357275">
        <id>Q99471</id>
    </interactant>
    <interactant intactId="EBI-1758534">
        <id>P41970</id>
        <label>ELK3</label>
    </interactant>
    <organismsDiffer>false</organismsDiffer>
    <experiments>3</experiments>
</comment>
<comment type="interaction">
    <interactant intactId="EBI-357275">
        <id>Q99471</id>
    </interactant>
    <interactant intactId="EBI-12831272">
        <id>Q6ZVH7</id>
        <label>ESPNL</label>
    </interactant>
    <organismsDiffer>false</organismsDiffer>
    <experiments>3</experiments>
</comment>
<comment type="interaction">
    <interactant intactId="EBI-357275">
        <id>Q99471</id>
    </interactant>
    <interactant intactId="EBI-12013806">
        <id>Q6NZ36-4</id>
        <label>FAAP20</label>
    </interactant>
    <organismsDiffer>false</organismsDiffer>
    <experiments>3</experiments>
</comment>
<comment type="interaction">
    <interactant intactId="EBI-357275">
        <id>Q99471</id>
    </interactant>
    <interactant intactId="EBI-1752811">
        <id>Q9BQ89</id>
        <label>FAM110A</label>
    </interactant>
    <organismsDiffer>false</organismsDiffer>
    <experiments>3</experiments>
</comment>
<comment type="interaction">
    <interactant intactId="EBI-357275">
        <id>Q99471</id>
    </interactant>
    <interactant intactId="EBI-11960181">
        <id>A4D161</id>
        <label>FAM221A</label>
    </interactant>
    <organismsDiffer>false</organismsDiffer>
    <experiments>3</experiments>
</comment>
<comment type="interaction">
    <interactant intactId="EBI-357275">
        <id>Q99471</id>
    </interactant>
    <interactant intactId="EBI-2807642">
        <id>Q8WU58</id>
        <label>FAM222B</label>
    </interactant>
    <organismsDiffer>false</organismsDiffer>
    <experiments>3</experiments>
</comment>
<comment type="interaction">
    <interactant intactId="EBI-357275">
        <id>Q99471</id>
    </interactant>
    <interactant intactId="EBI-6658203">
        <id>Q86YD7</id>
        <label>FAM90A1</label>
    </interactant>
    <organismsDiffer>false</organismsDiffer>
    <experiments>3</experiments>
</comment>
<comment type="interaction">
    <interactant intactId="EBI-357275">
        <id>Q99471</id>
    </interactant>
    <interactant intactId="EBI-374781">
        <id>O76003</id>
        <label>GLRX3</label>
    </interactant>
    <organismsDiffer>false</organismsDiffer>
    <experiments>3</experiments>
</comment>
<comment type="interaction">
    <interactant intactId="EBI-357275">
        <id>Q99471</id>
    </interactant>
    <interactant intactId="EBI-748515">
        <id>Q8IVS8</id>
        <label>GLYCTK</label>
    </interactant>
    <organismsDiffer>false</organismsDiffer>
    <experiments>3</experiments>
</comment>
<comment type="interaction">
    <interactant intactId="EBI-357275">
        <id>Q99471</id>
    </interactant>
    <interactant intactId="EBI-357130">
        <id>P62873</id>
        <label>GNB1</label>
    </interactant>
    <organismsDiffer>false</organismsDiffer>
    <experiments>2</experiments>
</comment>
<comment type="interaction">
    <interactant intactId="EBI-357275">
        <id>Q99471</id>
    </interactant>
    <interactant intactId="EBI-713325">
        <id>O14775</id>
        <label>GNB5</label>
    </interactant>
    <organismsDiffer>false</organismsDiffer>
    <experiments>2</experiments>
</comment>
<comment type="interaction">
    <interactant intactId="EBI-357275">
        <id>Q99471</id>
    </interactant>
    <interactant intactId="EBI-751540">
        <id>O95872</id>
        <label>GPANK1</label>
    </interactant>
    <organismsDiffer>false</organismsDiffer>
    <experiments>3</experiments>
</comment>
<comment type="interaction">
    <interactant intactId="EBI-357275">
        <id>Q99471</id>
    </interactant>
    <interactant intactId="EBI-10194609">
        <id>Q9H4Y5</id>
        <label>GSTO2</label>
    </interactant>
    <organismsDiffer>false</organismsDiffer>
    <experiments>3</experiments>
</comment>
<comment type="interaction">
    <interactant intactId="EBI-357275">
        <id>Q99471</id>
    </interactant>
    <interactant intactId="EBI-11978177">
        <id>Q96NT3-2</id>
        <label>GUCD1</label>
    </interactant>
    <organismsDiffer>false</organismsDiffer>
    <experiments>3</experiments>
</comment>
<comment type="interaction">
    <interactant intactId="EBI-357275">
        <id>Q99471</id>
    </interactant>
    <interactant intactId="EBI-11956675">
        <id>Q9GZV7</id>
        <label>HAPLN2</label>
    </interactant>
    <organismsDiffer>false</organismsDiffer>
    <experiments>3</experiments>
</comment>
<comment type="interaction">
    <interactant intactId="EBI-357275">
        <id>Q99471</id>
    </interactant>
    <interactant intactId="EBI-747421">
        <id>Q03014</id>
        <label>HHEX</label>
    </interactant>
    <organismsDiffer>false</organismsDiffer>
    <experiments>3</experiments>
</comment>
<comment type="interaction">
    <interactant intactId="EBI-357275">
        <id>Q99471</id>
    </interactant>
    <interactant intactId="EBI-745290">
        <id>P17482</id>
        <label>HOXB9</label>
    </interactant>
    <organismsDiffer>false</organismsDiffer>
    <experiments>3</experiments>
</comment>
<comment type="interaction">
    <interactant intactId="EBI-357275">
        <id>Q99471</id>
    </interactant>
    <interactant intactId="EBI-1752118">
        <id>P31273</id>
        <label>HOXC8</label>
    </interactant>
    <organismsDiffer>false</organismsDiffer>
    <experiments>3</experiments>
</comment>
<comment type="interaction">
    <interactant intactId="EBI-357275">
        <id>Q99471</id>
    </interactant>
    <interactant intactId="EBI-466029">
        <id>P42858</id>
        <label>HTT</label>
    </interactant>
    <organismsDiffer>false</organismsDiffer>
    <experiments>3</experiments>
</comment>
<comment type="interaction">
    <interactant intactId="EBI-357275">
        <id>Q99471</id>
    </interactant>
    <interactant intactId="EBI-747204">
        <id>Q9UKT9</id>
        <label>IKZF3</label>
    </interactant>
    <organismsDiffer>false</organismsDiffer>
    <experiments>7</experiments>
</comment>
<comment type="interaction">
    <interactant intactId="EBI-357275">
        <id>Q99471</id>
    </interactant>
    <interactant intactId="EBI-17178971">
        <id>Q14005-2</id>
        <label>IL16</label>
    </interactant>
    <organismsDiffer>false</organismsDiffer>
    <experiments>3</experiments>
</comment>
<comment type="interaction">
    <interactant intactId="EBI-357275">
        <id>Q99471</id>
    </interactant>
    <interactant intactId="EBI-6509505">
        <id>Q0VD86</id>
        <label>INCA1</label>
    </interactant>
    <organismsDiffer>false</organismsDiffer>
    <experiments>3</experiments>
</comment>
<comment type="interaction">
    <interactant intactId="EBI-357275">
        <id>Q99471</id>
    </interactant>
    <interactant intactId="EBI-12166369">
        <id>Q9BZI1</id>
        <label>IRX2</label>
    </interactant>
    <organismsDiffer>false</organismsDiffer>
    <experiments>3</experiments>
</comment>
<comment type="interaction">
    <interactant intactId="EBI-357275">
        <id>Q99471</id>
    </interactant>
    <interactant intactId="EBI-12100506">
        <id>P78412</id>
        <label>IRX6</label>
    </interactant>
    <organismsDiffer>false</organismsDiffer>
    <experiments>3</experiments>
</comment>
<comment type="interaction">
    <interactant intactId="EBI-357275">
        <id>Q99471</id>
    </interactant>
    <interactant intactId="EBI-4397613">
        <id>Q7L273</id>
        <label>KCTD9</label>
    </interactant>
    <organismsDiffer>false</organismsDiffer>
    <experiments>3</experiments>
</comment>
<comment type="interaction">
    <interactant intactId="EBI-357275">
        <id>Q99471</id>
    </interactant>
    <interactant intactId="EBI-710124">
        <id>O60341</id>
        <label>KDM1A</label>
    </interactant>
    <organismsDiffer>false</organismsDiffer>
    <experiments>3</experiments>
</comment>
<comment type="interaction">
    <interactant intactId="EBI-357275">
        <id>Q99471</id>
    </interactant>
    <interactant intactId="EBI-948266">
        <id>O14901</id>
        <label>KLF11</label>
    </interactant>
    <organismsDiffer>false</organismsDiffer>
    <experiments>3</experiments>
</comment>
<comment type="interaction">
    <interactant intactId="EBI-357275">
        <id>Q99471</id>
    </interactant>
    <interactant intactId="EBI-6426443">
        <id>Q2WGJ6</id>
        <label>KLHL38</label>
    </interactant>
    <organismsDiffer>false</organismsDiffer>
    <experiments>3</experiments>
</comment>
<comment type="interaction">
    <interactant intactId="EBI-357275">
        <id>Q99471</id>
    </interactant>
    <interactant intactId="EBI-739890">
        <id>Q9P2K6</id>
        <label>KLHL42</label>
    </interactant>
    <organismsDiffer>false</organismsDiffer>
    <experiments>3</experiments>
</comment>
<comment type="interaction">
    <interactant intactId="EBI-357275">
        <id>Q99471</id>
    </interactant>
    <interactant intactId="EBI-12079790">
        <id>Q6P4E2</id>
        <label>LARP4</label>
    </interactant>
    <organismsDiffer>false</organismsDiffer>
    <experiments>3</experiments>
</comment>
<comment type="interaction">
    <interactant intactId="EBI-357275">
        <id>Q99471</id>
    </interactant>
    <interactant intactId="EBI-739832">
        <id>Q8TBB1</id>
        <label>LNX1</label>
    </interactant>
    <organismsDiffer>false</organismsDiffer>
    <experiments>3</experiments>
</comment>
<comment type="interaction">
    <interactant intactId="EBI-357275">
        <id>Q99471</id>
    </interactant>
    <interactant intactId="EBI-307294">
        <id>Q13163</id>
        <label>MAP2K5</label>
    </interactant>
    <organismsDiffer>false</organismsDiffer>
    <experiments>3</experiments>
</comment>
<comment type="interaction">
    <interactant intactId="EBI-357275">
        <id>Q99471</id>
    </interactant>
    <interactant intactId="EBI-8652459">
        <id>Q8WXB1</id>
        <label>METTL21A</label>
    </interactant>
    <organismsDiffer>false</organismsDiffer>
    <experiments>3</experiments>
</comment>
<comment type="interaction">
    <interactant intactId="EBI-357275">
        <id>Q99471</id>
    </interactant>
    <interactant intactId="EBI-2555085">
        <id>Q8IVT2</id>
        <label>MISP</label>
    </interactant>
    <organismsDiffer>false</organismsDiffer>
    <experiments>3</experiments>
</comment>
<comment type="interaction">
    <interactant intactId="EBI-357275">
        <id>Q99471</id>
    </interactant>
    <interactant intactId="EBI-2514313">
        <id>Q9BRJ2</id>
        <label>MRPL45</label>
    </interactant>
    <organismsDiffer>false</organismsDiffer>
    <experiments>3</experiments>
</comment>
<comment type="interaction">
    <interactant intactId="EBI-357275">
        <id>Q99471</id>
    </interactant>
    <interactant intactId="EBI-296701">
        <id>Q9UBF9</id>
        <label>MYOT</label>
    </interactant>
    <organismsDiffer>false</organismsDiffer>
    <experiments>3</experiments>
</comment>
<comment type="interaction">
    <interactant intactId="EBI-357275">
        <id>Q99471</id>
    </interactant>
    <interactant intactId="EBI-744402">
        <id>Q9NP98</id>
        <label>MYOZ1</label>
    </interactant>
    <organismsDiffer>false</organismsDiffer>
    <experiments>3</experiments>
</comment>
<comment type="interaction">
    <interactant intactId="EBI-357275">
        <id>Q99471</id>
    </interactant>
    <interactant intactId="EBI-7969348">
        <id>Q9H2A3</id>
        <label>NEUROG2</label>
    </interactant>
    <organismsDiffer>false</organismsDiffer>
    <experiments>3</experiments>
</comment>
<comment type="interaction">
    <interactant intactId="EBI-357275">
        <id>Q99471</id>
    </interactant>
    <interactant intactId="EBI-12025760">
        <id>Q86UR1-2</id>
        <label>NOXA1</label>
    </interactant>
    <organismsDiffer>false</organismsDiffer>
    <experiments>3</experiments>
</comment>
<comment type="interaction">
    <interactant intactId="EBI-357275">
        <id>Q99471</id>
    </interactant>
    <interactant intactId="EBI-741158">
        <id>Q96HA8</id>
        <label>NTAQ1</label>
    </interactant>
    <organismsDiffer>false</organismsDiffer>
    <experiments>3</experiments>
</comment>
<comment type="interaction">
    <interactant intactId="EBI-357275">
        <id>Q99471</id>
    </interactant>
    <interactant intactId="EBI-11022007">
        <id>Q9HBE1-4</id>
        <label>PATZ1</label>
    </interactant>
    <organismsDiffer>false</organismsDiffer>
    <experiments>3</experiments>
</comment>
<comment type="interaction">
    <interactant intactId="EBI-357275">
        <id>Q99471</id>
    </interactant>
    <interactant intactId="EBI-12111000">
        <id>P55771</id>
        <label>PAX9</label>
    </interactant>
    <organismsDiffer>false</organismsDiffer>
    <experiments>3</experiments>
</comment>
<comment type="interaction">
    <interactant intactId="EBI-357275">
        <id>Q99471</id>
    </interactant>
    <interactant intactId="EBI-752057">
        <id>Q7Z412</id>
        <label>PEX26</label>
    </interactant>
    <organismsDiffer>false</organismsDiffer>
    <experiments>3</experiments>
</comment>
<comment type="interaction">
    <interactant intactId="EBI-357275">
        <id>Q99471</id>
    </interactant>
    <interactant intactId="EBI-359873">
        <id>Q9UHV9</id>
        <label>PFDN2</label>
    </interactant>
    <organismsDiffer>false</organismsDiffer>
    <experiments>7</experiments>
</comment>
<comment type="interaction">
    <interactant intactId="EBI-357275">
        <id>Q99471</id>
    </interactant>
    <interactant intactId="EBI-530034">
        <id>O43189</id>
        <label>PHF1</label>
    </interactant>
    <organismsDiffer>false</organismsDiffer>
    <experiments>3</experiments>
</comment>
<comment type="interaction">
    <interactant intactId="EBI-357275">
        <id>Q99471</id>
    </interactant>
    <interactant intactId="EBI-17717171">
        <id>Q9UPV7</id>
        <label>PHF24</label>
    </interactant>
    <organismsDiffer>false</organismsDiffer>
    <experiments>3</experiments>
</comment>
<comment type="interaction">
    <interactant intactId="EBI-357275">
        <id>Q99471</id>
    </interactant>
    <interactant intactId="EBI-12117156">
        <id>C9JJ79</id>
        <label>PILRA</label>
    </interactant>
    <organismsDiffer>false</organismsDiffer>
    <experiments>3</experiments>
</comment>
<comment type="interaction">
    <interactant intactId="EBI-357275">
        <id>Q99471</id>
    </interactant>
    <interactant intactId="EBI-748265">
        <id>P78337</id>
        <label>PITX1</label>
    </interactant>
    <organismsDiffer>false</organismsDiffer>
    <experiments>3</experiments>
</comment>
<comment type="interaction">
    <interactant intactId="EBI-357275">
        <id>Q99471</id>
    </interactant>
    <interactant intactId="EBI-12138495">
        <id>Q99697-2</id>
        <label>PITX2</label>
    </interactant>
    <organismsDiffer>false</organismsDiffer>
    <experiments>3</experiments>
</comment>
<comment type="interaction">
    <interactant intactId="EBI-357275">
        <id>Q99471</id>
    </interactant>
    <interactant intactId="EBI-1389308">
        <id>Q7Z3K3</id>
        <label>POGZ</label>
    </interactant>
    <organismsDiffer>false</organismsDiffer>
    <experiments>3</experiments>
</comment>
<comment type="interaction">
    <interactant intactId="EBI-357275">
        <id>Q99471</id>
    </interactant>
    <interactant intactId="EBI-1053424">
        <id>O43741</id>
        <label>PRKAB2</label>
    </interactant>
    <organismsDiffer>false</organismsDiffer>
    <experiments>3</experiments>
</comment>
<comment type="interaction">
    <interactant intactId="EBI-357275">
        <id>Q99471</id>
    </interactant>
    <interactant intactId="EBI-2798416">
        <id>Q99633</id>
        <label>PRPF18</label>
    </interactant>
    <organismsDiffer>false</organismsDiffer>
    <experiments>3</experiments>
</comment>
<comment type="interaction">
    <interactant intactId="EBI-357275">
        <id>Q99471</id>
    </interactant>
    <interactant intactId="EBI-11986293">
        <id>P0CG20</id>
        <label>PRR35</label>
    </interactant>
    <organismsDiffer>false</organismsDiffer>
    <experiments>3</experiments>
</comment>
<comment type="interaction">
    <interactant intactId="EBI-357275">
        <id>Q99471</id>
    </interactant>
    <interactant intactId="EBI-603350">
        <id>P28070</id>
        <label>PSMB4</label>
    </interactant>
    <organismsDiffer>false</organismsDiffer>
    <experiments>3</experiments>
</comment>
<comment type="interaction">
    <interactant intactId="EBI-357275">
        <id>Q99471</id>
    </interactant>
    <interactant intactId="EBI-372312">
        <id>P28062-2</id>
        <label>PSMB8</label>
    </interactant>
    <organismsDiffer>false</organismsDiffer>
    <experiments>3</experiments>
</comment>
<comment type="interaction">
    <interactant intactId="EBI-357275">
        <id>Q99471</id>
    </interactant>
    <interactant intactId="EBI-355546">
        <id>P61289</id>
        <label>PSME3</label>
    </interactant>
    <organismsDiffer>false</organismsDiffer>
    <experiments>6</experiments>
</comment>
<comment type="interaction">
    <interactant intactId="EBI-357275">
        <id>Q99471</id>
    </interactant>
    <interactant intactId="EBI-10265323">
        <id>Q8N443</id>
        <label>RIBC1</label>
    </interactant>
    <organismsDiffer>false</organismsDiffer>
    <experiments>3</experiments>
</comment>
<comment type="interaction">
    <interactant intactId="EBI-357275">
        <id>Q99471</id>
    </interactant>
    <interactant intactId="EBI-10226430">
        <id>Q0D2K3</id>
        <label>RIPPLY1</label>
    </interactant>
    <organismsDiffer>false</organismsDiffer>
    <experiments>3</experiments>
</comment>
<comment type="interaction">
    <interactant intactId="EBI-357275">
        <id>Q99471</id>
    </interactant>
    <interactant intactId="EBI-953753">
        <id>Q7L4I2</id>
        <label>RSRC2</label>
    </interactant>
    <organismsDiffer>false</organismsDiffer>
    <experiments>3</experiments>
</comment>
<comment type="interaction">
    <interactant intactId="EBI-357275">
        <id>Q99471</id>
    </interactant>
    <interactant intactId="EBI-6257312">
        <id>Q9BVN2</id>
        <label>RUSC1</label>
    </interactant>
    <organismsDiffer>false</organismsDiffer>
    <experiments>3</experiments>
</comment>
<comment type="interaction">
    <interactant intactId="EBI-357275">
        <id>Q99471</id>
    </interactant>
    <interactant intactId="EBI-3957636">
        <id>Q8IYX7</id>
        <label>SAXO1</label>
    </interactant>
    <organismsDiffer>false</organismsDiffer>
    <experiments>3</experiments>
</comment>
<comment type="interaction">
    <interactant intactId="EBI-357275">
        <id>Q99471</id>
    </interactant>
    <interactant intactId="EBI-12000762">
        <id>Q7Z5V6-2</id>
        <label>SAXO4</label>
    </interactant>
    <organismsDiffer>false</organismsDiffer>
    <experiments>3</experiments>
</comment>
<comment type="interaction">
    <interactant intactId="EBI-357275">
        <id>Q99471</id>
    </interactant>
    <interactant intactId="EBI-748391">
        <id>Q9BWG6</id>
        <label>SCNM1</label>
    </interactant>
    <organismsDiffer>false</organismsDiffer>
    <experiments>3</experiments>
</comment>
<comment type="interaction">
    <interactant intactId="EBI-357275">
        <id>Q99471</id>
    </interactant>
    <interactant intactId="EBI-727004">
        <id>O00560</id>
        <label>SDCBP</label>
    </interactant>
    <organismsDiffer>false</organismsDiffer>
    <experiments>3</experiments>
</comment>
<comment type="interaction">
    <interactant intactId="EBI-357275">
        <id>Q99471</id>
    </interactant>
    <interactant intactId="EBI-12037847">
        <id>Q6ZSJ9</id>
        <label>SHISA6</label>
    </interactant>
    <organismsDiffer>false</organismsDiffer>
    <experiments>3</experiments>
</comment>
<comment type="interaction">
    <interactant intactId="EBI-357275">
        <id>Q99471</id>
    </interactant>
    <interactant intactId="EBI-10269374">
        <id>Q8ND83</id>
        <label>SLAIN1</label>
    </interactant>
    <organismsDiffer>false</organismsDiffer>
    <experiments>3</experiments>
</comment>
<comment type="interaction">
    <interactant intactId="EBI-357275">
        <id>Q99471</id>
    </interactant>
    <interactant intactId="EBI-12061577">
        <id>Q8IYB5-2</id>
        <label>SMAP1</label>
    </interactant>
    <organismsDiffer>false</organismsDiffer>
    <experiments>3</experiments>
</comment>
<comment type="interaction">
    <interactant intactId="EBI-357275">
        <id>Q99471</id>
    </interactant>
    <interactant intactId="EBI-2872322">
        <id>Q9H0W8</id>
        <label>SMG9</label>
    </interactant>
    <organismsDiffer>false</organismsDiffer>
    <experiments>3</experiments>
</comment>
<comment type="interaction">
    <interactant intactId="EBI-357275">
        <id>Q99471</id>
    </interactant>
    <interactant intactId="EBI-1045459">
        <id>O95863</id>
        <label>SNAI1</label>
    </interactant>
    <organismsDiffer>false</organismsDiffer>
    <experiments>3</experiments>
</comment>
<comment type="interaction">
    <interactant intactId="EBI-357275">
        <id>Q99471</id>
    </interactant>
    <interactant intactId="EBI-9675976">
        <id>Q9BV90</id>
        <label>SNRNP25</label>
    </interactant>
    <organismsDiffer>false</organismsDiffer>
    <experiments>3</experiments>
</comment>
<comment type="interaction">
    <interactant intactId="EBI-357275">
        <id>Q99471</id>
    </interactant>
    <interactant intactId="EBI-372475">
        <id>P14678-2</id>
        <label>SNRPB</label>
    </interactant>
    <organismsDiffer>false</organismsDiffer>
    <experiments>3</experiments>
</comment>
<comment type="interaction">
    <interactant intactId="EBI-357275">
        <id>Q99471</id>
    </interactant>
    <interactant intactId="EBI-12288855">
        <id>Q5JUK2</id>
        <label>SOHLH1</label>
    </interactant>
    <organismsDiffer>false</organismsDiffer>
    <experiments>3</experiments>
</comment>
<comment type="interaction">
    <interactant intactId="EBI-357275">
        <id>Q99471</id>
    </interactant>
    <interactant intactId="EBI-11959123">
        <id>Q99932-2</id>
        <label>SPAG8</label>
    </interactant>
    <organismsDiffer>false</organismsDiffer>
    <experiments>3</experiments>
</comment>
<comment type="interaction">
    <interactant intactId="EBI-357275">
        <id>Q99471</id>
    </interactant>
    <interactant intactId="EBI-742688">
        <id>Q9NZD8</id>
        <label>SPG21</label>
    </interactant>
    <organismsDiffer>false</organismsDiffer>
    <experiments>3</experiments>
</comment>
<comment type="interaction">
    <interactant intactId="EBI-357275">
        <id>Q99471</id>
    </interactant>
    <interactant intactId="EBI-12020542">
        <id>Q96LM5</id>
        <label>SPMIP2</label>
    </interactant>
    <organismsDiffer>false</organismsDiffer>
    <experiments>3</experiments>
</comment>
<comment type="interaction">
    <interactant intactId="EBI-357275">
        <id>Q99471</id>
    </interactant>
    <interactant intactId="EBI-10174456">
        <id>Q8N865</id>
        <label>SPMIP4</label>
    </interactant>
    <organismsDiffer>false</organismsDiffer>
    <experiments>3</experiments>
</comment>
<comment type="interaction">
    <interactant intactId="EBI-357275">
        <id>Q99471</id>
    </interactant>
    <interactant intactId="EBI-10176124">
        <id>B7ZLI8</id>
        <label>STK19</label>
    </interactant>
    <organismsDiffer>false</organismsDiffer>
    <experiments>3</experiments>
</comment>
<comment type="interaction">
    <interactant intactId="EBI-357275">
        <id>Q99471</id>
    </interactant>
    <interactant intactId="EBI-745392">
        <id>Q9BSW7</id>
        <label>SYT17</label>
    </interactant>
    <organismsDiffer>false</organismsDiffer>
    <experiments>3</experiments>
</comment>
<comment type="interaction">
    <interactant intactId="EBI-357275">
        <id>Q99471</id>
    </interactant>
    <interactant intactId="EBI-743984">
        <id>Q9Y6J9</id>
        <label>TAF6L</label>
    </interactant>
    <organismsDiffer>false</organismsDiffer>
    <experiments>3</experiments>
</comment>
<comment type="interaction">
    <interactant intactId="EBI-357275">
        <id>Q99471</id>
    </interactant>
    <interactant intactId="EBI-3452216">
        <id>O15119</id>
        <label>TBX3</label>
    </interactant>
    <organismsDiffer>false</organismsDiffer>
    <experiments>3</experiments>
</comment>
<comment type="interaction">
    <interactant intactId="EBI-357275">
        <id>Q99471</id>
    </interactant>
    <interactant intactId="EBI-7413767">
        <id>Q9Y242</id>
        <label>TCF19</label>
    </interactant>
    <organismsDiffer>false</organismsDiffer>
    <experiments>3</experiments>
</comment>
<comment type="interaction">
    <interactant intactId="EBI-357275">
        <id>Q99471</id>
    </interactant>
    <interactant intactId="EBI-357061">
        <id>Q92734</id>
        <label>TFG</label>
    </interactant>
    <organismsDiffer>false</organismsDiffer>
    <experiments>3</experiments>
</comment>
<comment type="interaction">
    <interactant intactId="EBI-357275">
        <id>Q99471</id>
    </interactant>
    <interactant intactId="EBI-11741437">
        <id>Q08117-2</id>
        <label>TLE5</label>
    </interactant>
    <organismsDiffer>false</organismsDiffer>
    <experiments>3</experiments>
</comment>
<comment type="interaction">
    <interactant intactId="EBI-357275">
        <id>Q99471</id>
    </interactant>
    <interactant intactId="EBI-8451480">
        <id>O75865-2</id>
        <label>TRAPPC6A</label>
    </interactant>
    <organismsDiffer>false</organismsDiffer>
    <experiments>3</experiments>
</comment>
<comment type="interaction">
    <interactant intactId="EBI-357275">
        <id>Q99471</id>
    </interactant>
    <interactant intactId="EBI-12090999">
        <id>Q9UIW0</id>
        <label>VAX2</label>
    </interactant>
    <organismsDiffer>false</organismsDiffer>
    <experiments>3</experiments>
</comment>
<comment type="interaction">
    <interactant intactId="EBI-357275">
        <id>Q99471</id>
    </interactant>
    <interactant intactId="EBI-357430">
        <id>P61758</id>
        <label>VBP1</label>
    </interactant>
    <organismsDiffer>false</organismsDiffer>
    <experiments>9</experiments>
</comment>
<comment type="interaction">
    <interactant intactId="EBI-357275">
        <id>Q99471</id>
    </interactant>
    <interactant intactId="EBI-11980193">
        <id>Q14119</id>
        <label>VEZF1</label>
    </interactant>
    <organismsDiffer>false</organismsDiffer>
    <experiments>3</experiments>
</comment>
<comment type="interaction">
    <interactant intactId="EBI-357275">
        <id>Q99471</id>
    </interactant>
    <interactant intactId="EBI-11983165">
        <id>Q99990</id>
        <label>VGLL1</label>
    </interactant>
    <organismsDiffer>false</organismsDiffer>
    <experiments>3</experiments>
</comment>
<comment type="interaction">
    <interactant intactId="EBI-357275">
        <id>Q99471</id>
    </interactant>
    <interactant intactId="EBI-12032042">
        <id>Q64LD2-2</id>
        <label>WDR25</label>
    </interactant>
    <organismsDiffer>false</organismsDiffer>
    <experiments>3</experiments>
</comment>
<comment type="interaction">
    <interactant intactId="EBI-357275">
        <id>Q99471</id>
    </interactant>
    <interactant intactId="EBI-11721624">
        <id>P62699</id>
        <label>YPEL5</label>
    </interactant>
    <organismsDiffer>false</organismsDiffer>
    <experiments>3</experiments>
</comment>
<comment type="interaction">
    <interactant intactId="EBI-357275">
        <id>Q99471</id>
    </interactant>
    <interactant intactId="EBI-14104088">
        <id>Q53FD0-2</id>
        <label>ZC2HC1C</label>
    </interactant>
    <organismsDiffer>false</organismsDiffer>
    <experiments>3</experiments>
</comment>
<comment type="interaction">
    <interactant intactId="EBI-357275">
        <id>Q99471</id>
    </interactant>
    <interactant intactId="EBI-11742222">
        <id>Q9UQR1-2</id>
        <label>ZNF148</label>
    </interactant>
    <organismsDiffer>false</organismsDiffer>
    <experiments>3</experiments>
</comment>
<comment type="interaction">
    <interactant intactId="EBI-357275">
        <id>Q99471</id>
    </interactant>
    <interactant intactId="EBI-1647907">
        <id>Q9DUN1</id>
        <label>vIRF-3</label>
    </interactant>
    <organismsDiffer>true</organismsDiffer>
    <experiments>8</experiments>
</comment>
<comment type="subcellular location">
    <molecule>Isoform 1</molecule>
    <subcellularLocation>
        <location>Nucleus</location>
    </subcellularLocation>
</comment>
<comment type="subcellular location">
    <molecule>Isoform 2</molecule>
    <subcellularLocation>
        <location>Cytoplasm</location>
    </subcellularLocation>
</comment>
<comment type="subcellular location">
    <molecule>Isoform 3</molecule>
    <subcellularLocation>
        <location>Nucleus</location>
    </subcellularLocation>
</comment>
<comment type="alternative products">
    <event type="alternative splicing"/>
    <isoform>
        <id>Q99471-1</id>
        <name>1</name>
        <name>MM1-alpha</name>
        <sequence type="displayed"/>
    </isoform>
    <isoform>
        <id>Q99471-2</id>
        <name>2</name>
        <name>MM1-beta</name>
        <sequence type="described" ref="VSP_043104"/>
    </isoform>
    <isoform>
        <id>Q99471-3</id>
        <name>3</name>
        <name>MM1-gamma</name>
        <sequence type="described" ref="VSP_043103"/>
    </isoform>
    <text>Additional isoforms seem to exist.</text>
</comment>
<comment type="tissue specificity">
    <text>Highly expressed in pancreas and skeletal muscle and moderately in other tissues.</text>
</comment>
<comment type="miscellaneous">
    <molecule>Isoform 2</molecule>
    <text evidence="3">Does not repress transcription activity of MYC.</text>
</comment>
<comment type="similarity">
    <text evidence="3">Belongs to the prefoldin subunit alpha family.</text>
</comment>
<comment type="sequence caution" evidence="3">
    <conflict type="erroneous initiation">
        <sequence resource="EMBL-CDS" id="BAA14006"/>
    </conflict>
</comment>
<organism>
    <name type="scientific">Homo sapiens</name>
    <name type="common">Human</name>
    <dbReference type="NCBI Taxonomy" id="9606"/>
    <lineage>
        <taxon>Eukaryota</taxon>
        <taxon>Metazoa</taxon>
        <taxon>Chordata</taxon>
        <taxon>Craniata</taxon>
        <taxon>Vertebrata</taxon>
        <taxon>Euteleostomi</taxon>
        <taxon>Mammalia</taxon>
        <taxon>Eutheria</taxon>
        <taxon>Euarchontoglires</taxon>
        <taxon>Primates</taxon>
        <taxon>Haplorrhini</taxon>
        <taxon>Catarrhini</taxon>
        <taxon>Hominidae</taxon>
        <taxon>Homo</taxon>
    </lineage>
</organism>
<evidence type="ECO:0000269" key="1">
    <source>
    </source>
</evidence>
<evidence type="ECO:0000303" key="2">
    <source>
    </source>
</evidence>
<evidence type="ECO:0000305" key="3"/>
<evidence type="ECO:0007744" key="4">
    <source>
    </source>
</evidence>
<evidence type="ECO:0007744" key="5">
    <source>
    </source>
</evidence>
<evidence type="ECO:0007744" key="6">
    <source>
    </source>
</evidence>
<evidence type="ECO:0007744" key="7">
    <source>
    </source>
</evidence>
<proteinExistence type="evidence at protein level"/>
<dbReference type="EMBL" id="D89667">
    <property type="protein sequence ID" value="BAA14006.1"/>
    <property type="status" value="ALT_INIT"/>
    <property type="molecule type" value="mRNA"/>
</dbReference>
<dbReference type="EMBL" id="AB055802">
    <property type="protein sequence ID" value="BAB32643.1"/>
    <property type="molecule type" value="Genomic_DNA"/>
</dbReference>
<dbReference type="EMBL" id="AB055803">
    <property type="protein sequence ID" value="BAB32644.1"/>
    <property type="molecule type" value="mRNA"/>
</dbReference>
<dbReference type="EMBL" id="AB055804">
    <property type="protein sequence ID" value="BAB32645.1"/>
    <property type="molecule type" value="mRNA"/>
</dbReference>
<dbReference type="EMBL" id="AB055805">
    <property type="protein sequence ID" value="BAB32646.1"/>
    <property type="molecule type" value="mRNA"/>
</dbReference>
<dbReference type="EMBL" id="BT007195">
    <property type="protein sequence ID" value="AAP35859.1"/>
    <property type="molecule type" value="mRNA"/>
</dbReference>
<dbReference type="EMBL" id="AK292623">
    <property type="protein sequence ID" value="BAF85312.1"/>
    <property type="molecule type" value="mRNA"/>
</dbReference>
<dbReference type="EMBL" id="AC073611">
    <property type="status" value="NOT_ANNOTATED_CDS"/>
    <property type="molecule type" value="Genomic_DNA"/>
</dbReference>
<dbReference type="EMBL" id="CH471054">
    <property type="protein sequence ID" value="EAW96683.1"/>
    <property type="molecule type" value="Genomic_DNA"/>
</dbReference>
<dbReference type="EMBL" id="CH471054">
    <property type="protein sequence ID" value="EAW96685.1"/>
    <property type="molecule type" value="Genomic_DNA"/>
</dbReference>
<dbReference type="EMBL" id="BC003373">
    <property type="status" value="NOT_ANNOTATED_CDS"/>
    <property type="molecule type" value="mRNA"/>
</dbReference>
<dbReference type="EMBL" id="BC062671">
    <property type="protein sequence ID" value="AAH62671.1"/>
    <property type="molecule type" value="mRNA"/>
</dbReference>
<dbReference type="CCDS" id="CCDS8853.1">
    <molecule id="Q99471-1"/>
</dbReference>
<dbReference type="CCDS" id="CCDS8854.1">
    <molecule id="Q99471-3"/>
</dbReference>
<dbReference type="RefSeq" id="NP_002615.2">
    <molecule id="Q99471-1"/>
    <property type="nucleotide sequence ID" value="NM_002624.3"/>
</dbReference>
<dbReference type="RefSeq" id="NP_665904.1">
    <molecule id="Q99471-3"/>
    <property type="nucleotide sequence ID" value="NM_145897.3"/>
</dbReference>
<dbReference type="PDB" id="6NR8">
    <property type="method" value="EM"/>
    <property type="resolution" value="7.80 A"/>
    <property type="chains" value="5=11-137"/>
</dbReference>
<dbReference type="PDB" id="6NR9">
    <property type="method" value="EM"/>
    <property type="resolution" value="8.50 A"/>
    <property type="chains" value="5=11-137"/>
</dbReference>
<dbReference type="PDB" id="6NRB">
    <property type="method" value="EM"/>
    <property type="resolution" value="8.70 A"/>
    <property type="chains" value="5=11-137"/>
</dbReference>
<dbReference type="PDB" id="6NRC">
    <property type="method" value="EM"/>
    <property type="resolution" value="8.30 A"/>
    <property type="chains" value="5=11-137"/>
</dbReference>
<dbReference type="PDB" id="6NRD">
    <property type="method" value="EM"/>
    <property type="resolution" value="8.20 A"/>
    <property type="chains" value="5=11-137"/>
</dbReference>
<dbReference type="PDB" id="7WU7">
    <property type="method" value="EM"/>
    <property type="resolution" value="3.85 A"/>
    <property type="chains" value="5=1-140"/>
</dbReference>
<dbReference type="PDBsum" id="6NR8"/>
<dbReference type="PDBsum" id="6NR9"/>
<dbReference type="PDBsum" id="6NRB"/>
<dbReference type="PDBsum" id="6NRC"/>
<dbReference type="PDBsum" id="6NRD"/>
<dbReference type="PDBsum" id="7WU7"/>
<dbReference type="EMDB" id="EMD-0490"/>
<dbReference type="EMDB" id="EMD-0491"/>
<dbReference type="EMDB" id="EMD-0493"/>
<dbReference type="EMDB" id="EMD-0494"/>
<dbReference type="EMDB" id="EMD-0495"/>
<dbReference type="EMDB" id="EMD-32823"/>
<dbReference type="SMR" id="Q99471"/>
<dbReference type="BioGRID" id="111226">
    <property type="interactions" value="315"/>
</dbReference>
<dbReference type="ComplexPortal" id="CPX-25767">
    <property type="entry name" value="Prefoldin co-chaperone complex"/>
</dbReference>
<dbReference type="ComplexPortal" id="CPX-6149">
    <property type="entry name" value="Prefoldin co-chaperone complex"/>
</dbReference>
<dbReference type="CORUM" id="Q99471"/>
<dbReference type="DIP" id="DIP-28155N"/>
<dbReference type="FunCoup" id="Q99471">
    <property type="interactions" value="2272"/>
</dbReference>
<dbReference type="IntAct" id="Q99471">
    <property type="interactions" value="222"/>
</dbReference>
<dbReference type="MINT" id="Q99471"/>
<dbReference type="STRING" id="9606.ENSP00000447942"/>
<dbReference type="GlyGen" id="Q99471">
    <property type="glycosylation" value="1 site, 1 O-linked glycan (1 site)"/>
</dbReference>
<dbReference type="iPTMnet" id="Q99471"/>
<dbReference type="PhosphoSitePlus" id="Q99471"/>
<dbReference type="SwissPalm" id="Q99471"/>
<dbReference type="BioMuta" id="PFDN5"/>
<dbReference type="DMDM" id="12231038"/>
<dbReference type="OGP" id="Q99471"/>
<dbReference type="jPOST" id="Q99471"/>
<dbReference type="MassIVE" id="Q99471"/>
<dbReference type="PaxDb" id="9606-ENSP00000447942"/>
<dbReference type="PeptideAtlas" id="Q99471"/>
<dbReference type="ProteomicsDB" id="78287">
    <molecule id="Q99471-1"/>
</dbReference>
<dbReference type="ProteomicsDB" id="78288">
    <molecule id="Q99471-2"/>
</dbReference>
<dbReference type="ProteomicsDB" id="78289">
    <molecule id="Q99471-3"/>
</dbReference>
<dbReference type="Pumba" id="Q99471"/>
<dbReference type="TopDownProteomics" id="Q99471-1">
    <molecule id="Q99471-1"/>
</dbReference>
<dbReference type="TopDownProteomics" id="Q99471-3">
    <molecule id="Q99471-3"/>
</dbReference>
<dbReference type="Antibodypedia" id="1782">
    <property type="antibodies" value="253 antibodies from 28 providers"/>
</dbReference>
<dbReference type="DNASU" id="5204"/>
<dbReference type="Ensembl" id="ENST00000243040.10">
    <molecule id="Q99471-2"/>
    <property type="protein sequence ID" value="ENSP00000243040.6"/>
    <property type="gene ID" value="ENSG00000123349.15"/>
</dbReference>
<dbReference type="Ensembl" id="ENST00000334478.9">
    <molecule id="Q99471-1"/>
    <property type="protein sequence ID" value="ENSP00000334188.4"/>
    <property type="gene ID" value="ENSG00000123349.15"/>
</dbReference>
<dbReference type="Ensembl" id="ENST00000351500.7">
    <molecule id="Q99471-3"/>
    <property type="protein sequence ID" value="ENSP00000266964.4"/>
    <property type="gene ID" value="ENSG00000123349.15"/>
</dbReference>
<dbReference type="Ensembl" id="ENST00000551018.5">
    <molecule id="Q99471-1"/>
    <property type="protein sequence ID" value="ENSP00000447942.1"/>
    <property type="gene ID" value="ENSG00000123349.15"/>
</dbReference>
<dbReference type="Ensembl" id="ENST00000708922.1">
    <molecule id="Q99471-1"/>
    <property type="protein sequence ID" value="ENSP00000517421.1"/>
    <property type="gene ID" value="ENSG00000291834.1"/>
</dbReference>
<dbReference type="Ensembl" id="ENST00000708930.1">
    <molecule id="Q99471-3"/>
    <property type="protein sequence ID" value="ENSP00000517425.1"/>
    <property type="gene ID" value="ENSG00000291834.1"/>
</dbReference>
<dbReference type="Ensembl" id="ENST00000708936.1">
    <molecule id="Q99471-2"/>
    <property type="protein sequence ID" value="ENSP00000517428.1"/>
    <property type="gene ID" value="ENSG00000291834.1"/>
</dbReference>
<dbReference type="Ensembl" id="ENST00000708937.1">
    <molecule id="Q99471-1"/>
    <property type="protein sequence ID" value="ENSP00000517429.1"/>
    <property type="gene ID" value="ENSG00000291834.1"/>
</dbReference>
<dbReference type="GeneID" id="5204"/>
<dbReference type="KEGG" id="hsa:5204"/>
<dbReference type="MANE-Select" id="ENST00000334478.9">
    <property type="protein sequence ID" value="ENSP00000334188.4"/>
    <property type="RefSeq nucleotide sequence ID" value="NM_002624.4"/>
    <property type="RefSeq protein sequence ID" value="NP_002615.2"/>
</dbReference>
<dbReference type="UCSC" id="uc001scl.5">
    <molecule id="Q99471-1"/>
    <property type="organism name" value="human"/>
</dbReference>
<dbReference type="AGR" id="HGNC:8869"/>
<dbReference type="CTD" id="5204"/>
<dbReference type="DisGeNET" id="5204"/>
<dbReference type="GeneCards" id="PFDN5"/>
<dbReference type="HGNC" id="HGNC:8869">
    <property type="gene designation" value="PFDN5"/>
</dbReference>
<dbReference type="HPA" id="ENSG00000123349">
    <property type="expression patterns" value="Low tissue specificity"/>
</dbReference>
<dbReference type="MIM" id="604899">
    <property type="type" value="gene"/>
</dbReference>
<dbReference type="neXtProt" id="NX_Q99471"/>
<dbReference type="OpenTargets" id="ENSG00000123349"/>
<dbReference type="PharmGKB" id="PA33210"/>
<dbReference type="VEuPathDB" id="HostDB:ENSG00000123349"/>
<dbReference type="eggNOG" id="KOG3048">
    <property type="taxonomic scope" value="Eukaryota"/>
</dbReference>
<dbReference type="GeneTree" id="ENSGT00390000008783"/>
<dbReference type="HOGENOM" id="CLU_091867_0_1_1"/>
<dbReference type="InParanoid" id="Q99471"/>
<dbReference type="OMA" id="QAKFKAC"/>
<dbReference type="OrthoDB" id="10267474at2759"/>
<dbReference type="PAN-GO" id="Q99471">
    <property type="GO annotations" value="3 GO annotations based on evolutionary models"/>
</dbReference>
<dbReference type="PhylomeDB" id="Q99471"/>
<dbReference type="TreeFam" id="TF106509"/>
<dbReference type="PathwayCommons" id="Q99471"/>
<dbReference type="Reactome" id="R-HSA-389957">
    <property type="pathway name" value="Prefoldin mediated transfer of substrate to CCT/TriC"/>
</dbReference>
<dbReference type="SignaLink" id="Q99471"/>
<dbReference type="SIGNOR" id="Q99471"/>
<dbReference type="BioGRID-ORCS" id="5204">
    <property type="hits" value="494 hits in 1171 CRISPR screens"/>
</dbReference>
<dbReference type="CD-CODE" id="91857CE7">
    <property type="entry name" value="Nucleolus"/>
</dbReference>
<dbReference type="ChiTaRS" id="PFDN5">
    <property type="organism name" value="human"/>
</dbReference>
<dbReference type="GeneWiki" id="PFDN5"/>
<dbReference type="GenomeRNAi" id="5204"/>
<dbReference type="Pharos" id="Q99471">
    <property type="development level" value="Tbio"/>
</dbReference>
<dbReference type="PRO" id="PR:Q99471"/>
<dbReference type="Proteomes" id="UP000005640">
    <property type="component" value="Chromosome 12"/>
</dbReference>
<dbReference type="RNAct" id="Q99471">
    <property type="molecule type" value="protein"/>
</dbReference>
<dbReference type="Bgee" id="ENSG00000123349">
    <property type="expression patterns" value="Expressed in pituitary gland and 99 other cell types or tissues"/>
</dbReference>
<dbReference type="ExpressionAtlas" id="Q99471">
    <property type="expression patterns" value="baseline and differential"/>
</dbReference>
<dbReference type="GO" id="GO:0005737">
    <property type="term" value="C:cytoplasm"/>
    <property type="evidence" value="ECO:0000318"/>
    <property type="project" value="GO_Central"/>
</dbReference>
<dbReference type="GO" id="GO:0005829">
    <property type="term" value="C:cytosol"/>
    <property type="evidence" value="ECO:0000314"/>
    <property type="project" value="HPA"/>
</dbReference>
<dbReference type="GO" id="GO:0045111">
    <property type="term" value="C:intermediate filament cytoskeleton"/>
    <property type="evidence" value="ECO:0000314"/>
    <property type="project" value="HPA"/>
</dbReference>
<dbReference type="GO" id="GO:0005634">
    <property type="term" value="C:nucleus"/>
    <property type="evidence" value="ECO:0000304"/>
    <property type="project" value="ProtInc"/>
</dbReference>
<dbReference type="GO" id="GO:0016272">
    <property type="term" value="C:prefoldin complex"/>
    <property type="evidence" value="ECO:0000314"/>
    <property type="project" value="FlyBase"/>
</dbReference>
<dbReference type="GO" id="GO:0001540">
    <property type="term" value="F:amyloid-beta binding"/>
    <property type="evidence" value="ECO:0000314"/>
    <property type="project" value="FlyBase"/>
</dbReference>
<dbReference type="GO" id="GO:0003714">
    <property type="term" value="F:transcription corepressor activity"/>
    <property type="evidence" value="ECO:0000304"/>
    <property type="project" value="ProtInc"/>
</dbReference>
<dbReference type="GO" id="GO:0051082">
    <property type="term" value="F:unfolded protein binding"/>
    <property type="evidence" value="ECO:0000314"/>
    <property type="project" value="FlyBase"/>
</dbReference>
<dbReference type="GO" id="GO:0061077">
    <property type="term" value="P:chaperone-mediated protein folding"/>
    <property type="evidence" value="ECO:0000303"/>
    <property type="project" value="ComplexPortal"/>
</dbReference>
<dbReference type="GO" id="GO:1905907">
    <property type="term" value="P:negative regulation of amyloid fibril formation"/>
    <property type="evidence" value="ECO:0000314"/>
    <property type="project" value="FlyBase"/>
</dbReference>
<dbReference type="GO" id="GO:0090090">
    <property type="term" value="P:negative regulation of canonical Wnt signaling pathway"/>
    <property type="evidence" value="ECO:0000315"/>
    <property type="project" value="BHF-UCL"/>
</dbReference>
<dbReference type="GO" id="GO:0045892">
    <property type="term" value="P:negative regulation of DNA-templated transcription"/>
    <property type="evidence" value="ECO:0000315"/>
    <property type="project" value="BHF-UCL"/>
</dbReference>
<dbReference type="GO" id="GO:0006457">
    <property type="term" value="P:protein folding"/>
    <property type="evidence" value="ECO:0000314"/>
    <property type="project" value="FlyBase"/>
</dbReference>
<dbReference type="GO" id="GO:0006355">
    <property type="term" value="P:regulation of DNA-templated transcription"/>
    <property type="evidence" value="ECO:0000304"/>
    <property type="project" value="ProtInc"/>
</dbReference>
<dbReference type="GO" id="GO:0060041">
    <property type="term" value="P:retina development in camera-type eye"/>
    <property type="evidence" value="ECO:0007669"/>
    <property type="project" value="Ensembl"/>
</dbReference>
<dbReference type="GO" id="GO:1990113">
    <property type="term" value="P:RNA polymerase I assembly"/>
    <property type="evidence" value="ECO:0000318"/>
    <property type="project" value="GO_Central"/>
</dbReference>
<dbReference type="GO" id="GO:1990114">
    <property type="term" value="P:RNA polymerase II core complex assembly"/>
    <property type="evidence" value="ECO:0000318"/>
    <property type="project" value="GO_Central"/>
</dbReference>
<dbReference type="GO" id="GO:1990115">
    <property type="term" value="P:RNA polymerase III assembly"/>
    <property type="evidence" value="ECO:0000318"/>
    <property type="project" value="GO_Central"/>
</dbReference>
<dbReference type="CDD" id="cd23157">
    <property type="entry name" value="Prefoldin_5"/>
    <property type="match status" value="1"/>
</dbReference>
<dbReference type="FunFam" id="1.10.287.370:FF:000004">
    <property type="entry name" value="Probable prefoldin subunit 5"/>
    <property type="match status" value="1"/>
</dbReference>
<dbReference type="Gene3D" id="1.10.287.370">
    <property type="match status" value="1"/>
</dbReference>
<dbReference type="HAMAP" id="MF_00308">
    <property type="entry name" value="PfdA"/>
    <property type="match status" value="1"/>
</dbReference>
<dbReference type="InterPro" id="IPR011599">
    <property type="entry name" value="PFD_alpha_archaea"/>
</dbReference>
<dbReference type="InterPro" id="IPR009053">
    <property type="entry name" value="Prefoldin"/>
</dbReference>
<dbReference type="InterPro" id="IPR004127">
    <property type="entry name" value="Prefoldin_subunit_alpha"/>
</dbReference>
<dbReference type="NCBIfam" id="TIGR00293">
    <property type="entry name" value="prefoldin subunit alpha"/>
    <property type="match status" value="1"/>
</dbReference>
<dbReference type="PANTHER" id="PTHR12674">
    <property type="entry name" value="PREFOLDIN SUBUNIT 5"/>
    <property type="match status" value="1"/>
</dbReference>
<dbReference type="PANTHER" id="PTHR12674:SF2">
    <property type="entry name" value="PREFOLDIN SUBUNIT 5"/>
    <property type="match status" value="1"/>
</dbReference>
<dbReference type="Pfam" id="PF02996">
    <property type="entry name" value="Prefoldin"/>
    <property type="match status" value="1"/>
</dbReference>
<dbReference type="SUPFAM" id="SSF46579">
    <property type="entry name" value="Prefoldin"/>
    <property type="match status" value="1"/>
</dbReference>
<gene>
    <name type="primary">PFDN5</name>
    <name type="synonym">MM1</name>
    <name type="synonym">PFD5</name>
</gene>
<keyword id="KW-0002">3D-structure</keyword>
<keyword id="KW-0007">Acetylation</keyword>
<keyword id="KW-0025">Alternative splicing</keyword>
<keyword id="KW-0143">Chaperone</keyword>
<keyword id="KW-0963">Cytoplasm</keyword>
<keyword id="KW-0539">Nucleus</keyword>
<keyword id="KW-0597">Phosphoprotein</keyword>
<keyword id="KW-1267">Proteomics identification</keyword>
<keyword id="KW-1185">Reference proteome</keyword>
<sequence length="154" mass="17328">MAQSINITELNLPQLEMLKNQLDQEVEFLSTSIAQLKVVQTKYVEAKDCLNVLNKSNEGKELLVPLTSSMYVPGKLHDVEHVLIDVGTGYYVEKTAEDAKDFFKRKIDFLTKQMEKIQPALQEKHAMKQAVMEMMSQKIQQLTALGAAQATAKA</sequence>
<reference key="1">
    <citation type="journal article" date="1998" name="J. Biol. Chem.">
        <title>MM-1, a novel c-Myc-associating protein that represses transcriptional activity of c-Myc.</title>
        <authorList>
            <person name="Mori K."/>
            <person name="Maeda Y."/>
            <person name="Kitaura H."/>
            <person name="Taira T."/>
            <person name="Iguchi-Ariga S.M."/>
            <person name="Ariga H."/>
        </authorList>
    </citation>
    <scope>NUCLEOTIDE SEQUENCE [MRNA] (ISOFORM 1)</scope>
    <source>
        <tissue>Brain</tissue>
    </source>
</reference>
<reference key="2">
    <citation type="journal article" date="2001" name="J. Biol. Chem.">
        <title>MM-1, a c-Myc-binding protein, is a candidate for a tumor suppressor in leukemia/lymphoma and tongue cancer.</title>
        <authorList>
            <person name="Fujioka Y."/>
            <person name="Taira T."/>
            <person name="Maeda Y."/>
            <person name="Tanaka S."/>
            <person name="Nishihara H."/>
            <person name="Iguchi-Ariga S.M.M."/>
            <person name="Nagashima K."/>
            <person name="Ariga H."/>
        </authorList>
    </citation>
    <scope>NUCLEOTIDE SEQUENCE [GENOMIC DNA / MRNA] (ISOFORM 1)</scope>
    <source>
        <tissue>Blood</tissue>
        <tissue>Fibroblast</tissue>
    </source>
</reference>
<reference key="3">
    <citation type="journal article" date="2006" name="J. Cell. Biochem.">
        <title>Distinct localizations and repression activities of MM-1 isoforms toward c-Myc.</title>
        <authorList>
            <person name="Hagio Y."/>
            <person name="Kimura Y."/>
            <person name="Taira T."/>
            <person name="Fujioka Y."/>
            <person name="Iguchi-Ariga S.M.M."/>
            <person name="Ariga H."/>
        </authorList>
    </citation>
    <scope>NUCLEOTIDE SEQUENCE [MRNA] (ISOFORMS 2 AND 3)</scope>
    <scope>SUBCELLULAR LOCATION</scope>
    <scope>ALTERNATIVE SPLICING</scope>
    <source>
        <tissue>B-cell</tissue>
        <tissue>Placenta</tissue>
    </source>
</reference>
<reference key="4">
    <citation type="submission" date="2003-05" db="EMBL/GenBank/DDBJ databases">
        <title>Cloning of human full-length CDSs in BD Creator(TM) system donor vector.</title>
        <authorList>
            <person name="Kalnine N."/>
            <person name="Chen X."/>
            <person name="Rolfs A."/>
            <person name="Halleck A."/>
            <person name="Hines L."/>
            <person name="Eisenstein S."/>
            <person name="Koundinya M."/>
            <person name="Raphael J."/>
            <person name="Moreira D."/>
            <person name="Kelley T."/>
            <person name="LaBaer J."/>
            <person name="Lin Y."/>
            <person name="Phelan M."/>
            <person name="Farmer A."/>
        </authorList>
    </citation>
    <scope>NUCLEOTIDE SEQUENCE [LARGE SCALE MRNA] (ISOFORM 1)</scope>
</reference>
<reference key="5">
    <citation type="journal article" date="2004" name="Nat. Genet.">
        <title>Complete sequencing and characterization of 21,243 full-length human cDNAs.</title>
        <authorList>
            <person name="Ota T."/>
            <person name="Suzuki Y."/>
            <person name="Nishikawa T."/>
            <person name="Otsuki T."/>
            <person name="Sugiyama T."/>
            <person name="Irie R."/>
            <person name="Wakamatsu A."/>
            <person name="Hayashi K."/>
            <person name="Sato H."/>
            <person name="Nagai K."/>
            <person name="Kimura K."/>
            <person name="Makita H."/>
            <person name="Sekine M."/>
            <person name="Obayashi M."/>
            <person name="Nishi T."/>
            <person name="Shibahara T."/>
            <person name="Tanaka T."/>
            <person name="Ishii S."/>
            <person name="Yamamoto J."/>
            <person name="Saito K."/>
            <person name="Kawai Y."/>
            <person name="Isono Y."/>
            <person name="Nakamura Y."/>
            <person name="Nagahari K."/>
            <person name="Murakami K."/>
            <person name="Yasuda T."/>
            <person name="Iwayanagi T."/>
            <person name="Wagatsuma M."/>
            <person name="Shiratori A."/>
            <person name="Sudo H."/>
            <person name="Hosoiri T."/>
            <person name="Kaku Y."/>
            <person name="Kodaira H."/>
            <person name="Kondo H."/>
            <person name="Sugawara M."/>
            <person name="Takahashi M."/>
            <person name="Kanda K."/>
            <person name="Yokoi T."/>
            <person name="Furuya T."/>
            <person name="Kikkawa E."/>
            <person name="Omura Y."/>
            <person name="Abe K."/>
            <person name="Kamihara K."/>
            <person name="Katsuta N."/>
            <person name="Sato K."/>
            <person name="Tanikawa M."/>
            <person name="Yamazaki M."/>
            <person name="Ninomiya K."/>
            <person name="Ishibashi T."/>
            <person name="Yamashita H."/>
            <person name="Murakawa K."/>
            <person name="Fujimori K."/>
            <person name="Tanai H."/>
            <person name="Kimata M."/>
            <person name="Watanabe M."/>
            <person name="Hiraoka S."/>
            <person name="Chiba Y."/>
            <person name="Ishida S."/>
            <person name="Ono Y."/>
            <person name="Takiguchi S."/>
            <person name="Watanabe S."/>
            <person name="Yosida M."/>
            <person name="Hotuta T."/>
            <person name="Kusano J."/>
            <person name="Kanehori K."/>
            <person name="Takahashi-Fujii A."/>
            <person name="Hara H."/>
            <person name="Tanase T.-O."/>
            <person name="Nomura Y."/>
            <person name="Togiya S."/>
            <person name="Komai F."/>
            <person name="Hara R."/>
            <person name="Takeuchi K."/>
            <person name="Arita M."/>
            <person name="Imose N."/>
            <person name="Musashino K."/>
            <person name="Yuuki H."/>
            <person name="Oshima A."/>
            <person name="Sasaki N."/>
            <person name="Aotsuka S."/>
            <person name="Yoshikawa Y."/>
            <person name="Matsunawa H."/>
            <person name="Ichihara T."/>
            <person name="Shiohata N."/>
            <person name="Sano S."/>
            <person name="Moriya S."/>
            <person name="Momiyama H."/>
            <person name="Satoh N."/>
            <person name="Takami S."/>
            <person name="Terashima Y."/>
            <person name="Suzuki O."/>
            <person name="Nakagawa S."/>
            <person name="Senoh A."/>
            <person name="Mizoguchi H."/>
            <person name="Goto Y."/>
            <person name="Shimizu F."/>
            <person name="Wakebe H."/>
            <person name="Hishigaki H."/>
            <person name="Watanabe T."/>
            <person name="Sugiyama A."/>
            <person name="Takemoto M."/>
            <person name="Kawakami B."/>
            <person name="Yamazaki M."/>
            <person name="Watanabe K."/>
            <person name="Kumagai A."/>
            <person name="Itakura S."/>
            <person name="Fukuzumi Y."/>
            <person name="Fujimori Y."/>
            <person name="Komiyama M."/>
            <person name="Tashiro H."/>
            <person name="Tanigami A."/>
            <person name="Fujiwara T."/>
            <person name="Ono T."/>
            <person name="Yamada K."/>
            <person name="Fujii Y."/>
            <person name="Ozaki K."/>
            <person name="Hirao M."/>
            <person name="Ohmori Y."/>
            <person name="Kawabata A."/>
            <person name="Hikiji T."/>
            <person name="Kobatake N."/>
            <person name="Inagaki H."/>
            <person name="Ikema Y."/>
            <person name="Okamoto S."/>
            <person name="Okitani R."/>
            <person name="Kawakami T."/>
            <person name="Noguchi S."/>
            <person name="Itoh T."/>
            <person name="Shigeta K."/>
            <person name="Senba T."/>
            <person name="Matsumura K."/>
            <person name="Nakajima Y."/>
            <person name="Mizuno T."/>
            <person name="Morinaga M."/>
            <person name="Sasaki M."/>
            <person name="Togashi T."/>
            <person name="Oyama M."/>
            <person name="Hata H."/>
            <person name="Watanabe M."/>
            <person name="Komatsu T."/>
            <person name="Mizushima-Sugano J."/>
            <person name="Satoh T."/>
            <person name="Shirai Y."/>
            <person name="Takahashi Y."/>
            <person name="Nakagawa K."/>
            <person name="Okumura K."/>
            <person name="Nagase T."/>
            <person name="Nomura N."/>
            <person name="Kikuchi H."/>
            <person name="Masuho Y."/>
            <person name="Yamashita R."/>
            <person name="Nakai K."/>
            <person name="Yada T."/>
            <person name="Nakamura Y."/>
            <person name="Ohara O."/>
            <person name="Isogai T."/>
            <person name="Sugano S."/>
        </authorList>
    </citation>
    <scope>NUCLEOTIDE SEQUENCE [LARGE SCALE MRNA] (ISOFORM 1)</scope>
    <source>
        <tissue>Thymus</tissue>
    </source>
</reference>
<reference key="6">
    <citation type="journal article" date="2006" name="Nature">
        <title>The finished DNA sequence of human chromosome 12.</title>
        <authorList>
            <person name="Scherer S.E."/>
            <person name="Muzny D.M."/>
            <person name="Buhay C.J."/>
            <person name="Chen R."/>
            <person name="Cree A."/>
            <person name="Ding Y."/>
            <person name="Dugan-Rocha S."/>
            <person name="Gill R."/>
            <person name="Gunaratne P."/>
            <person name="Harris R.A."/>
            <person name="Hawes A.C."/>
            <person name="Hernandez J."/>
            <person name="Hodgson A.V."/>
            <person name="Hume J."/>
            <person name="Jackson A."/>
            <person name="Khan Z.M."/>
            <person name="Kovar-Smith C."/>
            <person name="Lewis L.R."/>
            <person name="Lozado R.J."/>
            <person name="Metzker M.L."/>
            <person name="Milosavljevic A."/>
            <person name="Miner G.R."/>
            <person name="Montgomery K.T."/>
            <person name="Morgan M.B."/>
            <person name="Nazareth L.V."/>
            <person name="Scott G."/>
            <person name="Sodergren E."/>
            <person name="Song X.-Z."/>
            <person name="Steffen D."/>
            <person name="Lovering R.C."/>
            <person name="Wheeler D.A."/>
            <person name="Worley K.C."/>
            <person name="Yuan Y."/>
            <person name="Zhang Z."/>
            <person name="Adams C.Q."/>
            <person name="Ansari-Lari M.A."/>
            <person name="Ayele M."/>
            <person name="Brown M.J."/>
            <person name="Chen G."/>
            <person name="Chen Z."/>
            <person name="Clerc-Blankenburg K.P."/>
            <person name="Davis C."/>
            <person name="Delgado O."/>
            <person name="Dinh H.H."/>
            <person name="Draper H."/>
            <person name="Gonzalez-Garay M.L."/>
            <person name="Havlak P."/>
            <person name="Jackson L.R."/>
            <person name="Jacob L.S."/>
            <person name="Kelly S.H."/>
            <person name="Li L."/>
            <person name="Li Z."/>
            <person name="Liu J."/>
            <person name="Liu W."/>
            <person name="Lu J."/>
            <person name="Maheshwari M."/>
            <person name="Nguyen B.-V."/>
            <person name="Okwuonu G.O."/>
            <person name="Pasternak S."/>
            <person name="Perez L.M."/>
            <person name="Plopper F.J.H."/>
            <person name="Santibanez J."/>
            <person name="Shen H."/>
            <person name="Tabor P.E."/>
            <person name="Verduzco D."/>
            <person name="Waldron L."/>
            <person name="Wang Q."/>
            <person name="Williams G.A."/>
            <person name="Zhang J."/>
            <person name="Zhou J."/>
            <person name="Allen C.C."/>
            <person name="Amin A.G."/>
            <person name="Anyalebechi V."/>
            <person name="Bailey M."/>
            <person name="Barbaria J.A."/>
            <person name="Bimage K.E."/>
            <person name="Bryant N.P."/>
            <person name="Burch P.E."/>
            <person name="Burkett C.E."/>
            <person name="Burrell K.L."/>
            <person name="Calderon E."/>
            <person name="Cardenas V."/>
            <person name="Carter K."/>
            <person name="Casias K."/>
            <person name="Cavazos I."/>
            <person name="Cavazos S.R."/>
            <person name="Ceasar H."/>
            <person name="Chacko J."/>
            <person name="Chan S.N."/>
            <person name="Chavez D."/>
            <person name="Christopoulos C."/>
            <person name="Chu J."/>
            <person name="Cockrell R."/>
            <person name="Cox C.D."/>
            <person name="Dang M."/>
            <person name="Dathorne S.R."/>
            <person name="David R."/>
            <person name="Davis C.M."/>
            <person name="Davy-Carroll L."/>
            <person name="Deshazo D.R."/>
            <person name="Donlin J.E."/>
            <person name="D'Souza L."/>
            <person name="Eaves K.A."/>
            <person name="Egan A."/>
            <person name="Emery-Cohen A.J."/>
            <person name="Escotto M."/>
            <person name="Flagg N."/>
            <person name="Forbes L.D."/>
            <person name="Gabisi A.M."/>
            <person name="Garza M."/>
            <person name="Hamilton C."/>
            <person name="Henderson N."/>
            <person name="Hernandez O."/>
            <person name="Hines S."/>
            <person name="Hogues M.E."/>
            <person name="Huang M."/>
            <person name="Idlebird D.G."/>
            <person name="Johnson R."/>
            <person name="Jolivet A."/>
            <person name="Jones S."/>
            <person name="Kagan R."/>
            <person name="King L.M."/>
            <person name="Leal B."/>
            <person name="Lebow H."/>
            <person name="Lee S."/>
            <person name="LeVan J.M."/>
            <person name="Lewis L.C."/>
            <person name="London P."/>
            <person name="Lorensuhewa L.M."/>
            <person name="Loulseged H."/>
            <person name="Lovett D.A."/>
            <person name="Lucier A."/>
            <person name="Lucier R.L."/>
            <person name="Ma J."/>
            <person name="Madu R.C."/>
            <person name="Mapua P."/>
            <person name="Martindale A.D."/>
            <person name="Martinez E."/>
            <person name="Massey E."/>
            <person name="Mawhiney S."/>
            <person name="Meador M.G."/>
            <person name="Mendez S."/>
            <person name="Mercado C."/>
            <person name="Mercado I.C."/>
            <person name="Merritt C.E."/>
            <person name="Miner Z.L."/>
            <person name="Minja E."/>
            <person name="Mitchell T."/>
            <person name="Mohabbat F."/>
            <person name="Mohabbat K."/>
            <person name="Montgomery B."/>
            <person name="Moore N."/>
            <person name="Morris S."/>
            <person name="Munidasa M."/>
            <person name="Ngo R.N."/>
            <person name="Nguyen N.B."/>
            <person name="Nickerson E."/>
            <person name="Nwaokelemeh O.O."/>
            <person name="Nwokenkwo S."/>
            <person name="Obregon M."/>
            <person name="Oguh M."/>
            <person name="Oragunye N."/>
            <person name="Oviedo R.J."/>
            <person name="Parish B.J."/>
            <person name="Parker D.N."/>
            <person name="Parrish J."/>
            <person name="Parks K.L."/>
            <person name="Paul H.A."/>
            <person name="Payton B.A."/>
            <person name="Perez A."/>
            <person name="Perrin W."/>
            <person name="Pickens A."/>
            <person name="Primus E.L."/>
            <person name="Pu L.-L."/>
            <person name="Puazo M."/>
            <person name="Quiles M.M."/>
            <person name="Quiroz J.B."/>
            <person name="Rabata D."/>
            <person name="Reeves K."/>
            <person name="Ruiz S.J."/>
            <person name="Shao H."/>
            <person name="Sisson I."/>
            <person name="Sonaike T."/>
            <person name="Sorelle R.P."/>
            <person name="Sutton A.E."/>
            <person name="Svatek A.F."/>
            <person name="Svetz L.A."/>
            <person name="Tamerisa K.S."/>
            <person name="Taylor T.R."/>
            <person name="Teague B."/>
            <person name="Thomas N."/>
            <person name="Thorn R.D."/>
            <person name="Trejos Z.Y."/>
            <person name="Trevino B.K."/>
            <person name="Ukegbu O.N."/>
            <person name="Urban J.B."/>
            <person name="Vasquez L.I."/>
            <person name="Vera V.A."/>
            <person name="Villasana D.M."/>
            <person name="Wang L."/>
            <person name="Ward-Moore S."/>
            <person name="Warren J.T."/>
            <person name="Wei X."/>
            <person name="White F."/>
            <person name="Williamson A.L."/>
            <person name="Wleczyk R."/>
            <person name="Wooden H.S."/>
            <person name="Wooden S.H."/>
            <person name="Yen J."/>
            <person name="Yoon L."/>
            <person name="Yoon V."/>
            <person name="Zorrilla S.E."/>
            <person name="Nelson D."/>
            <person name="Kucherlapati R."/>
            <person name="Weinstock G."/>
            <person name="Gibbs R.A."/>
        </authorList>
    </citation>
    <scope>NUCLEOTIDE SEQUENCE [LARGE SCALE GENOMIC DNA]</scope>
</reference>
<reference key="7">
    <citation type="submission" date="2005-07" db="EMBL/GenBank/DDBJ databases">
        <authorList>
            <person name="Mural R.J."/>
            <person name="Istrail S."/>
            <person name="Sutton G.G."/>
            <person name="Florea L."/>
            <person name="Halpern A.L."/>
            <person name="Mobarry C.M."/>
            <person name="Lippert R."/>
            <person name="Walenz B."/>
            <person name="Shatkay H."/>
            <person name="Dew I."/>
            <person name="Miller J.R."/>
            <person name="Flanigan M.J."/>
            <person name="Edwards N.J."/>
            <person name="Bolanos R."/>
            <person name="Fasulo D."/>
            <person name="Halldorsson B.V."/>
            <person name="Hannenhalli S."/>
            <person name="Turner R."/>
            <person name="Yooseph S."/>
            <person name="Lu F."/>
            <person name="Nusskern D.R."/>
            <person name="Shue B.C."/>
            <person name="Zheng X.H."/>
            <person name="Zhong F."/>
            <person name="Delcher A.L."/>
            <person name="Huson D.H."/>
            <person name="Kravitz S.A."/>
            <person name="Mouchard L."/>
            <person name="Reinert K."/>
            <person name="Remington K.A."/>
            <person name="Clark A.G."/>
            <person name="Waterman M.S."/>
            <person name="Eichler E.E."/>
            <person name="Adams M.D."/>
            <person name="Hunkapiller M.W."/>
            <person name="Myers E.W."/>
            <person name="Venter J.C."/>
        </authorList>
    </citation>
    <scope>NUCLEOTIDE SEQUENCE [LARGE SCALE GENOMIC DNA]</scope>
</reference>
<reference key="8">
    <citation type="journal article" date="2004" name="Genome Res.">
        <title>The status, quality, and expansion of the NIH full-length cDNA project: the Mammalian Gene Collection (MGC).</title>
        <authorList>
            <consortium name="The MGC Project Team"/>
        </authorList>
    </citation>
    <scope>NUCLEOTIDE SEQUENCE [LARGE SCALE MRNA] (ISOFORM 1)</scope>
    <source>
        <tissue>Placenta</tissue>
    </source>
</reference>
<reference key="9">
    <citation type="journal article" date="1998" name="Cell">
        <title>Prefoldin, a chaperone that delivers unfolded proteins to cytosolic chaperonin.</title>
        <authorList>
            <person name="Vainberg I.E."/>
            <person name="Lewis S.A."/>
            <person name="Rommelaere H."/>
            <person name="Ampe C."/>
            <person name="Vandekerckhove J."/>
            <person name="Klein H.L."/>
            <person name="Cowan N.J."/>
        </authorList>
    </citation>
    <scope>FUNCTION</scope>
</reference>
<reference key="10">
    <citation type="journal article" date="2009" name="Anal. Chem.">
        <title>Lys-N and trypsin cover complementary parts of the phosphoproteome in a refined SCX-based approach.</title>
        <authorList>
            <person name="Gauci S."/>
            <person name="Helbig A.O."/>
            <person name="Slijper M."/>
            <person name="Krijgsveld J."/>
            <person name="Heck A.J."/>
            <person name="Mohammed S."/>
        </authorList>
    </citation>
    <scope>ACETYLATION [LARGE SCALE ANALYSIS] AT ALA-2</scope>
    <scope>CLEAVAGE OF INITIATOR METHIONINE [LARGE SCALE ANALYSIS]</scope>
    <scope>IDENTIFICATION BY MASS SPECTROMETRY [LARGE SCALE ANALYSIS]</scope>
</reference>
<reference key="11">
    <citation type="journal article" date="2009" name="Science">
        <title>Lysine acetylation targets protein complexes and co-regulates major cellular functions.</title>
        <authorList>
            <person name="Choudhary C."/>
            <person name="Kumar C."/>
            <person name="Gnad F."/>
            <person name="Nielsen M.L."/>
            <person name="Rehman M."/>
            <person name="Walther T.C."/>
            <person name="Olsen J.V."/>
            <person name="Mann M."/>
        </authorList>
    </citation>
    <scope>ACETYLATION [LARGE SCALE ANALYSIS] AT LYS-42</scope>
    <scope>IDENTIFICATION BY MASS SPECTROMETRY [LARGE SCALE ANALYSIS]</scope>
</reference>
<reference key="12">
    <citation type="journal article" date="2011" name="BMC Syst. Biol.">
        <title>Initial characterization of the human central proteome.</title>
        <authorList>
            <person name="Burkard T.R."/>
            <person name="Planyavsky M."/>
            <person name="Kaupe I."/>
            <person name="Breitwieser F.P."/>
            <person name="Buerckstuemmer T."/>
            <person name="Bennett K.L."/>
            <person name="Superti-Furga G."/>
            <person name="Colinge J."/>
        </authorList>
    </citation>
    <scope>IDENTIFICATION BY MASS SPECTROMETRY [LARGE SCALE ANALYSIS]</scope>
</reference>
<reference key="13">
    <citation type="journal article" date="2012" name="Mol. Cell. Proteomics">
        <title>Comparative large-scale characterisation of plant vs. mammal proteins reveals similar and idiosyncratic N-alpha acetylation features.</title>
        <authorList>
            <person name="Bienvenut W.V."/>
            <person name="Sumpton D."/>
            <person name="Martinez A."/>
            <person name="Lilla S."/>
            <person name="Espagne C."/>
            <person name="Meinnel T."/>
            <person name="Giglione C."/>
        </authorList>
    </citation>
    <scope>ACETYLATION [LARGE SCALE ANALYSIS] AT ALA-2</scope>
    <scope>CLEAVAGE OF INITIATOR METHIONINE [LARGE SCALE ANALYSIS]</scope>
    <scope>IDENTIFICATION BY MASS SPECTROMETRY [LARGE SCALE ANALYSIS]</scope>
</reference>
<reference key="14">
    <citation type="journal article" date="2013" name="J. Proteome Res.">
        <title>Toward a comprehensive characterization of a human cancer cell phosphoproteome.</title>
        <authorList>
            <person name="Zhou H."/>
            <person name="Di Palma S."/>
            <person name="Preisinger C."/>
            <person name="Peng M."/>
            <person name="Polat A.N."/>
            <person name="Heck A.J."/>
            <person name="Mohammed S."/>
        </authorList>
    </citation>
    <scope>PHOSPHORYLATION [LARGE SCALE ANALYSIS] AT SER-56</scope>
    <scope>IDENTIFICATION BY MASS SPECTROMETRY [LARGE SCALE ANALYSIS]</scope>
    <source>
        <tissue>Erythroleukemia</tissue>
    </source>
</reference>
<name>PFD5_HUMAN</name>
<feature type="initiator methionine" description="Removed" evidence="4 6">
    <location>
        <position position="1"/>
    </location>
</feature>
<feature type="chain" id="PRO_0000153661" description="Prefoldin subunit 5">
    <location>
        <begin position="2"/>
        <end position="154"/>
    </location>
</feature>
<feature type="modified residue" description="N-acetylalanine" evidence="4 6">
    <location>
        <position position="2"/>
    </location>
</feature>
<feature type="modified residue" description="N6-acetyllysine" evidence="5">
    <location>
        <position position="42"/>
    </location>
</feature>
<feature type="modified residue" description="Phosphoserine" evidence="7">
    <location>
        <position position="56"/>
    </location>
</feature>
<feature type="splice variant" id="VSP_043103" description="In isoform 3." evidence="2">
    <location>
        <begin position="25"/>
        <end position="69"/>
    </location>
</feature>
<feature type="splice variant" id="VSP_043104" description="In isoform 2." evidence="2">
    <original>GKELLVPLTSSMYVPGKLHDVEHVLIDVGTGYYVEKTAEDAKDFFKRKIDFLTKQMEKIQPALQEKHAMKQAVMEMMSQKIQQLTALGAAQATAKA</original>
    <variation>DVCPWEAA</variation>
    <location>
        <begin position="59"/>
        <end position="154"/>
    </location>
</feature>
<accession>Q99471</accession>
<accession>A8K9A8</accession>
<accession>Q54AA8</accession>
<accession>Q9C083</accession>
<accession>Q9C084</accession>
<protein>
    <recommendedName>
        <fullName>Prefoldin subunit 5</fullName>
    </recommendedName>
    <alternativeName>
        <fullName>Myc modulator 1</fullName>
    </alternativeName>
    <alternativeName>
        <fullName>c-Myc-binding protein Mm-1</fullName>
    </alternativeName>
</protein>